<proteinExistence type="evidence at protein level"/>
<reference key="1">
    <citation type="journal article" date="2005" name="Nature">
        <title>The genome of the social amoeba Dictyostelium discoideum.</title>
        <authorList>
            <person name="Eichinger L."/>
            <person name="Pachebat J.A."/>
            <person name="Gloeckner G."/>
            <person name="Rajandream M.A."/>
            <person name="Sucgang R."/>
            <person name="Berriman M."/>
            <person name="Song J."/>
            <person name="Olsen R."/>
            <person name="Szafranski K."/>
            <person name="Xu Q."/>
            <person name="Tunggal B."/>
            <person name="Kummerfeld S."/>
            <person name="Madera M."/>
            <person name="Konfortov B.A."/>
            <person name="Rivero F."/>
            <person name="Bankier A.T."/>
            <person name="Lehmann R."/>
            <person name="Hamlin N."/>
            <person name="Davies R."/>
            <person name="Gaudet P."/>
            <person name="Fey P."/>
            <person name="Pilcher K."/>
            <person name="Chen G."/>
            <person name="Saunders D."/>
            <person name="Sodergren E.J."/>
            <person name="Davis P."/>
            <person name="Kerhornou A."/>
            <person name="Nie X."/>
            <person name="Hall N."/>
            <person name="Anjard C."/>
            <person name="Hemphill L."/>
            <person name="Bason N."/>
            <person name="Farbrother P."/>
            <person name="Desany B."/>
            <person name="Just E."/>
            <person name="Morio T."/>
            <person name="Rost R."/>
            <person name="Churcher C.M."/>
            <person name="Cooper J."/>
            <person name="Haydock S."/>
            <person name="van Driessche N."/>
            <person name="Cronin A."/>
            <person name="Goodhead I."/>
            <person name="Muzny D.M."/>
            <person name="Mourier T."/>
            <person name="Pain A."/>
            <person name="Lu M."/>
            <person name="Harper D."/>
            <person name="Lindsay R."/>
            <person name="Hauser H."/>
            <person name="James K.D."/>
            <person name="Quiles M."/>
            <person name="Madan Babu M."/>
            <person name="Saito T."/>
            <person name="Buchrieser C."/>
            <person name="Wardroper A."/>
            <person name="Felder M."/>
            <person name="Thangavelu M."/>
            <person name="Johnson D."/>
            <person name="Knights A."/>
            <person name="Loulseged H."/>
            <person name="Mungall K.L."/>
            <person name="Oliver K."/>
            <person name="Price C."/>
            <person name="Quail M.A."/>
            <person name="Urushihara H."/>
            <person name="Hernandez J."/>
            <person name="Rabbinowitsch E."/>
            <person name="Steffen D."/>
            <person name="Sanders M."/>
            <person name="Ma J."/>
            <person name="Kohara Y."/>
            <person name="Sharp S."/>
            <person name="Simmonds M.N."/>
            <person name="Spiegler S."/>
            <person name="Tivey A."/>
            <person name="Sugano S."/>
            <person name="White B."/>
            <person name="Walker D."/>
            <person name="Woodward J.R."/>
            <person name="Winckler T."/>
            <person name="Tanaka Y."/>
            <person name="Shaulsky G."/>
            <person name="Schleicher M."/>
            <person name="Weinstock G.M."/>
            <person name="Rosenthal A."/>
            <person name="Cox E.C."/>
            <person name="Chisholm R.L."/>
            <person name="Gibbs R.A."/>
            <person name="Loomis W.F."/>
            <person name="Platzer M."/>
            <person name="Kay R.R."/>
            <person name="Williams J.G."/>
            <person name="Dear P.H."/>
            <person name="Noegel A.A."/>
            <person name="Barrell B.G."/>
            <person name="Kuspa A."/>
        </authorList>
    </citation>
    <scope>NUCLEOTIDE SEQUENCE [LARGE SCALE GENOMIC DNA]</scope>
    <source>
        <strain>AX4</strain>
    </source>
</reference>
<reference key="2">
    <citation type="submission" date="2009-07" db="UniProtKB">
        <authorList>
            <person name="Bienvenut W.V."/>
            <person name="Ura S."/>
            <person name="Insall R.H."/>
        </authorList>
    </citation>
    <scope>PROTEIN SEQUENCE OF 96-104; 263-276; 300-321 AND 390-400</scope>
    <scope>IDENTIFICATION BY MASS SPECTROMETRY</scope>
    <source>
        <strain>AX2</strain>
    </source>
</reference>
<reference key="3">
    <citation type="submission" date="1996-03" db="EMBL/GenBank/DDBJ databases">
        <title>A putative partial cDNA clone of HMG-CoA synthase from Dictyostelium discoideum.</title>
        <authorList>
            <person name="Dhar M.S."/>
            <person name="Hauser L.J."/>
            <person name="Olins D.E."/>
            <person name="Olins A.L."/>
        </authorList>
    </citation>
    <scope>NUCLEOTIDE SEQUENCE [MRNA] OF 304-482</scope>
</reference>
<feature type="chain" id="PRO_0000213755" description="Hydroxymethylglutaryl-CoA synthase A">
    <location>
        <begin position="1"/>
        <end position="482"/>
    </location>
</feature>
<feature type="active site" description="Proton donor/acceptor" evidence="1">
    <location>
        <position position="85"/>
    </location>
</feature>
<feature type="active site" description="Acyl-thioester intermediate" evidence="1">
    <location>
        <position position="119"/>
    </location>
</feature>
<feature type="active site" description="Proton donor/acceptor" evidence="1">
    <location>
        <position position="249"/>
    </location>
</feature>
<feature type="binding site" evidence="2">
    <location>
        <position position="119"/>
    </location>
    <ligand>
        <name>(3S)-3-hydroxy-3-methylglutaryl-CoA</name>
        <dbReference type="ChEBI" id="CHEBI:43074"/>
    </ligand>
</feature>
<feature type="binding site" evidence="2">
    <location>
        <position position="161"/>
    </location>
    <ligand>
        <name>(3S)-3-hydroxy-3-methylglutaryl-CoA</name>
        <dbReference type="ChEBI" id="CHEBI:43074"/>
    </ligand>
</feature>
<feature type="binding site" evidence="2">
    <location>
        <position position="211"/>
    </location>
    <ligand>
        <name>(3S)-3-hydroxy-3-methylglutaryl-CoA</name>
        <dbReference type="ChEBI" id="CHEBI:43074"/>
    </ligand>
</feature>
<feature type="binding site" evidence="2">
    <location>
        <position position="249"/>
    </location>
    <ligand>
        <name>(3S)-3-hydroxy-3-methylglutaryl-CoA</name>
        <dbReference type="ChEBI" id="CHEBI:43074"/>
    </ligand>
</feature>
<feature type="binding site" evidence="2">
    <location>
        <position position="258"/>
    </location>
    <ligand>
        <name>(3S)-3-hydroxy-3-methylglutaryl-CoA</name>
        <dbReference type="ChEBI" id="CHEBI:43074"/>
    </ligand>
</feature>
<feature type="binding site" evidence="2">
    <location>
        <position position="325"/>
    </location>
    <ligand>
        <name>(3S)-3-hydroxy-3-methylglutaryl-CoA</name>
        <dbReference type="ChEBI" id="CHEBI:43074"/>
    </ligand>
</feature>
<feature type="binding site" evidence="2">
    <location>
        <position position="358"/>
    </location>
    <ligand>
        <name>(3S)-3-hydroxy-3-methylglutaryl-CoA</name>
        <dbReference type="ChEBI" id="CHEBI:43074"/>
    </ligand>
</feature>
<feature type="sequence conflict" description="In Ref. 3; AAA91055." evidence="3" ref="3">
    <original>ITK</original>
    <variation>RHE</variation>
    <location>
        <begin position="304"/>
        <end position="306"/>
    </location>
</feature>
<feature type="sequence conflict" description="In Ref. 3; AAA91055." evidence="3" ref="3">
    <original>N</original>
    <variation>K</variation>
    <location>
        <position position="434"/>
    </location>
</feature>
<feature type="sequence conflict" description="In Ref. 3; AAA91055." evidence="3" ref="3">
    <original>Y</original>
    <variation>F</variation>
    <location>
        <position position="440"/>
    </location>
</feature>
<feature type="sequence conflict" description="In Ref. 3; AAA91055." evidence="3" ref="3">
    <original>QSTIKS</original>
    <variation>HQQSNL</variation>
    <location>
        <begin position="461"/>
        <end position="466"/>
    </location>
</feature>
<evidence type="ECO:0000250" key="1"/>
<evidence type="ECO:0000250" key="2">
    <source>
        <dbReference type="UniProtKB" id="P54868"/>
    </source>
</evidence>
<evidence type="ECO:0000305" key="3"/>
<sequence length="482" mass="53741">MTKPENIGIHGIEVYFPSTYVAQEDLEKFDGVSQGKYTLGLGQTNMAFCGDREDIYSLSLNAVNNLMDKFNVDPNSIGRLEVGTETVIDKSKSVKTVLMDLFAKHGNTSIDGIDTINACYGGTSALHNALQWMESSYWDGRNAIVVAGDIAVYEKGPARPTGGAGVVAMLIGPNAPITFESGLRGVHMENVYDFYKPDMDSEYPRVDGKLSISCYFRAIDNCYNRYAKAFEKKYGKSFSLDQVDFALFHSPYNKLVQKSFGRMLYNDFLNNPNDSRYASLEAYKNVKPEDTYFDSVLEKALSAITKNDYATKVAPTTLLAKQLGNTYCGSTYSGLLSLLDEKSNDLVGKRVLTFSYGSGLAASAFSFKVEKPINHIVEKVDLKNRLAKRVRVEPEIFTEKLSLRETRHNLKNYVPSDETTNMFPGSFYLSSVDNAGIRKYDRTYSTSAVLGAFQRRQQISQSTIKSLNLFRATKSVLSILKK</sequence>
<dbReference type="EC" id="2.3.3.10"/>
<dbReference type="EMBL" id="AAFI02000111">
    <property type="protein sequence ID" value="EAL63202.1"/>
    <property type="molecule type" value="Genomic_DNA"/>
</dbReference>
<dbReference type="EMBL" id="L24114">
    <property type="protein sequence ID" value="AAA91055.1"/>
    <property type="status" value="ALT_FRAME"/>
    <property type="molecule type" value="mRNA"/>
</dbReference>
<dbReference type="RefSeq" id="XP_636713.1">
    <property type="nucleotide sequence ID" value="XM_631621.1"/>
</dbReference>
<dbReference type="SMR" id="P54872"/>
<dbReference type="FunCoup" id="P54872">
    <property type="interactions" value="522"/>
</dbReference>
<dbReference type="STRING" id="44689.P54872"/>
<dbReference type="PaxDb" id="44689-DDB0219924"/>
<dbReference type="EnsemblProtists" id="EAL63202">
    <property type="protein sequence ID" value="EAL63202"/>
    <property type="gene ID" value="DDB_G0288461"/>
</dbReference>
<dbReference type="GeneID" id="8626645"/>
<dbReference type="KEGG" id="ddi:DDB_G0288461"/>
<dbReference type="dictyBase" id="DDB_G0288461">
    <property type="gene designation" value="hgsA"/>
</dbReference>
<dbReference type="VEuPathDB" id="AmoebaDB:DDB_G0288461"/>
<dbReference type="eggNOG" id="KOG1393">
    <property type="taxonomic scope" value="Eukaryota"/>
</dbReference>
<dbReference type="HOGENOM" id="CLU_008065_0_1_1"/>
<dbReference type="InParanoid" id="P54872"/>
<dbReference type="OMA" id="DDAYNWI"/>
<dbReference type="PhylomeDB" id="P54872"/>
<dbReference type="Reactome" id="R-DDI-77111">
    <property type="pathway name" value="Synthesis of Ketone Bodies"/>
</dbReference>
<dbReference type="Reactome" id="R-DDI-9837999">
    <property type="pathway name" value="Mitochondrial protein degradation"/>
</dbReference>
<dbReference type="UniPathway" id="UPA00058">
    <property type="reaction ID" value="UER00102"/>
</dbReference>
<dbReference type="PRO" id="PR:P54872"/>
<dbReference type="Proteomes" id="UP000002195">
    <property type="component" value="Chromosome 5"/>
</dbReference>
<dbReference type="GO" id="GO:0004421">
    <property type="term" value="F:hydroxymethylglutaryl-CoA synthase activity"/>
    <property type="evidence" value="ECO:0000318"/>
    <property type="project" value="GO_Central"/>
</dbReference>
<dbReference type="GO" id="GO:0006084">
    <property type="term" value="P:acetyl-CoA metabolic process"/>
    <property type="evidence" value="ECO:0000318"/>
    <property type="project" value="GO_Central"/>
</dbReference>
<dbReference type="GO" id="GO:0010142">
    <property type="term" value="P:farnesyl diphosphate biosynthetic process, mevalonate pathway"/>
    <property type="evidence" value="ECO:0000318"/>
    <property type="project" value="GO_Central"/>
</dbReference>
<dbReference type="GO" id="GO:0044351">
    <property type="term" value="P:macropinocytosis"/>
    <property type="evidence" value="ECO:0000316"/>
    <property type="project" value="dictyBase"/>
</dbReference>
<dbReference type="GO" id="GO:0016126">
    <property type="term" value="P:sterol biosynthetic process"/>
    <property type="evidence" value="ECO:0007669"/>
    <property type="project" value="UniProtKB-KW"/>
</dbReference>
<dbReference type="CDD" id="cd00827">
    <property type="entry name" value="init_cond_enzymes"/>
    <property type="match status" value="1"/>
</dbReference>
<dbReference type="FunFam" id="3.40.47.10:FF:000008">
    <property type="entry name" value="3-hydroxy-3-methylglutaryl coenzyme A synthase"/>
    <property type="match status" value="1"/>
</dbReference>
<dbReference type="Gene3D" id="3.40.47.10">
    <property type="match status" value="1"/>
</dbReference>
<dbReference type="InterPro" id="IPR013746">
    <property type="entry name" value="HMG_CoA_synt_C_dom"/>
</dbReference>
<dbReference type="InterPro" id="IPR013528">
    <property type="entry name" value="HMG_CoA_synth_N"/>
</dbReference>
<dbReference type="InterPro" id="IPR010122">
    <property type="entry name" value="HMG_CoA_synthase_euk"/>
</dbReference>
<dbReference type="InterPro" id="IPR016039">
    <property type="entry name" value="Thiolase-like"/>
</dbReference>
<dbReference type="NCBIfam" id="TIGR01833">
    <property type="entry name" value="HMG-CoA-S_euk"/>
    <property type="match status" value="1"/>
</dbReference>
<dbReference type="PANTHER" id="PTHR43323">
    <property type="entry name" value="3-HYDROXY-3-METHYLGLUTARYL COENZYME A SYNTHASE"/>
    <property type="match status" value="1"/>
</dbReference>
<dbReference type="PANTHER" id="PTHR43323:SF14">
    <property type="entry name" value="HYDROXYMETHYLGLUTARYL-COA SYNTHASE A"/>
    <property type="match status" value="1"/>
</dbReference>
<dbReference type="Pfam" id="PF08540">
    <property type="entry name" value="HMG_CoA_synt_C"/>
    <property type="match status" value="1"/>
</dbReference>
<dbReference type="Pfam" id="PF01154">
    <property type="entry name" value="HMG_CoA_synt_N"/>
    <property type="match status" value="1"/>
</dbReference>
<dbReference type="SUPFAM" id="SSF53901">
    <property type="entry name" value="Thiolase-like"/>
    <property type="match status" value="2"/>
</dbReference>
<gene>
    <name type="primary">hgsA</name>
    <name type="ORF">DDB_G0288461</name>
</gene>
<organism>
    <name type="scientific">Dictyostelium discoideum</name>
    <name type="common">Social amoeba</name>
    <dbReference type="NCBI Taxonomy" id="44689"/>
    <lineage>
        <taxon>Eukaryota</taxon>
        <taxon>Amoebozoa</taxon>
        <taxon>Evosea</taxon>
        <taxon>Eumycetozoa</taxon>
        <taxon>Dictyostelia</taxon>
        <taxon>Dictyosteliales</taxon>
        <taxon>Dictyosteliaceae</taxon>
        <taxon>Dictyostelium</taxon>
    </lineage>
</organism>
<protein>
    <recommendedName>
        <fullName>Hydroxymethylglutaryl-CoA synthase A</fullName>
        <shortName>HMG-CoA synthase A</shortName>
        <ecNumber>2.3.3.10</ecNumber>
    </recommendedName>
    <alternativeName>
        <fullName>3-hydroxy-3-methylglutaryl coenzyme A synthase A</fullName>
    </alternativeName>
</protein>
<accession>P54872</accession>
<accession>Q54IW3</accession>
<name>HMCSA_DICDI</name>
<comment type="function">
    <text evidence="1">Condenses acetyl-CoA with acetoacetyl-CoA to form HMG-CoA, which is the substrate for HMG-CoA reductase.</text>
</comment>
<comment type="catalytic activity">
    <reaction>
        <text>acetoacetyl-CoA + acetyl-CoA + H2O = (3S)-3-hydroxy-3-methylglutaryl-CoA + CoA + H(+)</text>
        <dbReference type="Rhea" id="RHEA:10188"/>
        <dbReference type="ChEBI" id="CHEBI:15377"/>
        <dbReference type="ChEBI" id="CHEBI:15378"/>
        <dbReference type="ChEBI" id="CHEBI:43074"/>
        <dbReference type="ChEBI" id="CHEBI:57286"/>
        <dbReference type="ChEBI" id="CHEBI:57287"/>
        <dbReference type="ChEBI" id="CHEBI:57288"/>
        <dbReference type="EC" id="2.3.3.10"/>
    </reaction>
</comment>
<comment type="pathway">
    <text>Metabolic intermediate biosynthesis; (R)-mevalonate biosynthesis; (R)-mevalonate from acetyl-CoA: step 2/3.</text>
</comment>
<comment type="similarity">
    <text evidence="3">Belongs to the thiolase-like superfamily. HMG-CoA synthase family.</text>
</comment>
<comment type="sequence caution" evidence="3">
    <conflict type="frameshift">
        <sequence resource="EMBL-CDS" id="AAA91055"/>
    </conflict>
</comment>
<keyword id="KW-0903">Direct protein sequencing</keyword>
<keyword id="KW-0444">Lipid biosynthesis</keyword>
<keyword id="KW-0443">Lipid metabolism</keyword>
<keyword id="KW-1185">Reference proteome</keyword>
<keyword id="KW-0752">Steroid biosynthesis</keyword>
<keyword id="KW-0753">Steroid metabolism</keyword>
<keyword id="KW-0756">Sterol biosynthesis</keyword>
<keyword id="KW-1207">Sterol metabolism</keyword>
<keyword id="KW-0808">Transferase</keyword>